<comment type="function">
    <text>Binds to the catalytic subunit of the cyclin dependent kinases Cdk1 and Cdk2, and is essential for their biological function.</text>
</comment>
<comment type="subunit">
    <text evidence="1">Forms a homohexamer that can probably bind six kinase subunits.</text>
</comment>
<comment type="similarity">
    <text evidence="2">Belongs to the CKS family.</text>
</comment>
<feature type="chain" id="PRO_0000206242" description="Cyclin-dependent kinases regulatory subunit">
    <location>
        <begin position="1"/>
        <end position="74"/>
    </location>
</feature>
<organism>
    <name type="scientific">Drosophila melanogaster</name>
    <name type="common">Fruit fly</name>
    <dbReference type="NCBI Taxonomy" id="7227"/>
    <lineage>
        <taxon>Eukaryota</taxon>
        <taxon>Metazoa</taxon>
        <taxon>Ecdysozoa</taxon>
        <taxon>Arthropoda</taxon>
        <taxon>Hexapoda</taxon>
        <taxon>Insecta</taxon>
        <taxon>Pterygota</taxon>
        <taxon>Neoptera</taxon>
        <taxon>Endopterygota</taxon>
        <taxon>Diptera</taxon>
        <taxon>Brachycera</taxon>
        <taxon>Muscomorpha</taxon>
        <taxon>Ephydroidea</taxon>
        <taxon>Drosophilidae</taxon>
        <taxon>Drosophila</taxon>
        <taxon>Sophophora</taxon>
    </lineage>
</organism>
<reference key="1">
    <citation type="journal article" date="1994" name="Proc. Natl. Acad. Sci. U.S.A.">
        <title>Interaction mating reveals binary and ternary connections between Drosophila cell cycle regulators.</title>
        <authorList>
            <person name="Finley R.L. Jr."/>
            <person name="Brent R."/>
        </authorList>
    </citation>
    <scope>NUCLEOTIDE SEQUENCE [MRNA]</scope>
</reference>
<reference key="2">
    <citation type="journal article" date="2000" name="Science">
        <title>The genome sequence of Drosophila melanogaster.</title>
        <authorList>
            <person name="Adams M.D."/>
            <person name="Celniker S.E."/>
            <person name="Holt R.A."/>
            <person name="Evans C.A."/>
            <person name="Gocayne J.D."/>
            <person name="Amanatides P.G."/>
            <person name="Scherer S.E."/>
            <person name="Li P.W."/>
            <person name="Hoskins R.A."/>
            <person name="Galle R.F."/>
            <person name="George R.A."/>
            <person name="Lewis S.E."/>
            <person name="Richards S."/>
            <person name="Ashburner M."/>
            <person name="Henderson S.N."/>
            <person name="Sutton G.G."/>
            <person name="Wortman J.R."/>
            <person name="Yandell M.D."/>
            <person name="Zhang Q."/>
            <person name="Chen L.X."/>
            <person name="Brandon R.C."/>
            <person name="Rogers Y.-H.C."/>
            <person name="Blazej R.G."/>
            <person name="Champe M."/>
            <person name="Pfeiffer B.D."/>
            <person name="Wan K.H."/>
            <person name="Doyle C."/>
            <person name="Baxter E.G."/>
            <person name="Helt G."/>
            <person name="Nelson C.R."/>
            <person name="Miklos G.L.G."/>
            <person name="Abril J.F."/>
            <person name="Agbayani A."/>
            <person name="An H.-J."/>
            <person name="Andrews-Pfannkoch C."/>
            <person name="Baldwin D."/>
            <person name="Ballew R.M."/>
            <person name="Basu A."/>
            <person name="Baxendale J."/>
            <person name="Bayraktaroglu L."/>
            <person name="Beasley E.M."/>
            <person name="Beeson K.Y."/>
            <person name="Benos P.V."/>
            <person name="Berman B.P."/>
            <person name="Bhandari D."/>
            <person name="Bolshakov S."/>
            <person name="Borkova D."/>
            <person name="Botchan M.R."/>
            <person name="Bouck J."/>
            <person name="Brokstein P."/>
            <person name="Brottier P."/>
            <person name="Burtis K.C."/>
            <person name="Busam D.A."/>
            <person name="Butler H."/>
            <person name="Cadieu E."/>
            <person name="Center A."/>
            <person name="Chandra I."/>
            <person name="Cherry J.M."/>
            <person name="Cawley S."/>
            <person name="Dahlke C."/>
            <person name="Davenport L.B."/>
            <person name="Davies P."/>
            <person name="de Pablos B."/>
            <person name="Delcher A."/>
            <person name="Deng Z."/>
            <person name="Mays A.D."/>
            <person name="Dew I."/>
            <person name="Dietz S.M."/>
            <person name="Dodson K."/>
            <person name="Doup L.E."/>
            <person name="Downes M."/>
            <person name="Dugan-Rocha S."/>
            <person name="Dunkov B.C."/>
            <person name="Dunn P."/>
            <person name="Durbin K.J."/>
            <person name="Evangelista C.C."/>
            <person name="Ferraz C."/>
            <person name="Ferriera S."/>
            <person name="Fleischmann W."/>
            <person name="Fosler C."/>
            <person name="Gabrielian A.E."/>
            <person name="Garg N.S."/>
            <person name="Gelbart W.M."/>
            <person name="Glasser K."/>
            <person name="Glodek A."/>
            <person name="Gong F."/>
            <person name="Gorrell J.H."/>
            <person name="Gu Z."/>
            <person name="Guan P."/>
            <person name="Harris M."/>
            <person name="Harris N.L."/>
            <person name="Harvey D.A."/>
            <person name="Heiman T.J."/>
            <person name="Hernandez J.R."/>
            <person name="Houck J."/>
            <person name="Hostin D."/>
            <person name="Houston K.A."/>
            <person name="Howland T.J."/>
            <person name="Wei M.-H."/>
            <person name="Ibegwam C."/>
            <person name="Jalali M."/>
            <person name="Kalush F."/>
            <person name="Karpen G.H."/>
            <person name="Ke Z."/>
            <person name="Kennison J.A."/>
            <person name="Ketchum K.A."/>
            <person name="Kimmel B.E."/>
            <person name="Kodira C.D."/>
            <person name="Kraft C.L."/>
            <person name="Kravitz S."/>
            <person name="Kulp D."/>
            <person name="Lai Z."/>
            <person name="Lasko P."/>
            <person name="Lei Y."/>
            <person name="Levitsky A.A."/>
            <person name="Li J.H."/>
            <person name="Li Z."/>
            <person name="Liang Y."/>
            <person name="Lin X."/>
            <person name="Liu X."/>
            <person name="Mattei B."/>
            <person name="McIntosh T.C."/>
            <person name="McLeod M.P."/>
            <person name="McPherson D."/>
            <person name="Merkulov G."/>
            <person name="Milshina N.V."/>
            <person name="Mobarry C."/>
            <person name="Morris J."/>
            <person name="Moshrefi A."/>
            <person name="Mount S.M."/>
            <person name="Moy M."/>
            <person name="Murphy B."/>
            <person name="Murphy L."/>
            <person name="Muzny D.M."/>
            <person name="Nelson D.L."/>
            <person name="Nelson D.R."/>
            <person name="Nelson K.A."/>
            <person name="Nixon K."/>
            <person name="Nusskern D.R."/>
            <person name="Pacleb J.M."/>
            <person name="Palazzolo M."/>
            <person name="Pittman G.S."/>
            <person name="Pan S."/>
            <person name="Pollard J."/>
            <person name="Puri V."/>
            <person name="Reese M.G."/>
            <person name="Reinert K."/>
            <person name="Remington K."/>
            <person name="Saunders R.D.C."/>
            <person name="Scheeler F."/>
            <person name="Shen H."/>
            <person name="Shue B.C."/>
            <person name="Siden-Kiamos I."/>
            <person name="Simpson M."/>
            <person name="Skupski M.P."/>
            <person name="Smith T.J."/>
            <person name="Spier E."/>
            <person name="Spradling A.C."/>
            <person name="Stapleton M."/>
            <person name="Strong R."/>
            <person name="Sun E."/>
            <person name="Svirskas R."/>
            <person name="Tector C."/>
            <person name="Turner R."/>
            <person name="Venter E."/>
            <person name="Wang A.H."/>
            <person name="Wang X."/>
            <person name="Wang Z.-Y."/>
            <person name="Wassarman D.A."/>
            <person name="Weinstock G.M."/>
            <person name="Weissenbach J."/>
            <person name="Williams S.M."/>
            <person name="Woodage T."/>
            <person name="Worley K.C."/>
            <person name="Wu D."/>
            <person name="Yang S."/>
            <person name="Yao Q.A."/>
            <person name="Ye J."/>
            <person name="Yeh R.-F."/>
            <person name="Zaveri J.S."/>
            <person name="Zhan M."/>
            <person name="Zhang G."/>
            <person name="Zhao Q."/>
            <person name="Zheng L."/>
            <person name="Zheng X.H."/>
            <person name="Zhong F.N."/>
            <person name="Zhong W."/>
            <person name="Zhou X."/>
            <person name="Zhu S.C."/>
            <person name="Zhu X."/>
            <person name="Smith H.O."/>
            <person name="Gibbs R.A."/>
            <person name="Myers E.W."/>
            <person name="Rubin G.M."/>
            <person name="Venter J.C."/>
        </authorList>
    </citation>
    <scope>NUCLEOTIDE SEQUENCE [LARGE SCALE GENOMIC DNA]</scope>
    <source>
        <strain>Berkeley</strain>
    </source>
</reference>
<reference key="3">
    <citation type="journal article" date="2002" name="Genome Biol.">
        <title>Annotation of the Drosophila melanogaster euchromatic genome: a systematic review.</title>
        <authorList>
            <person name="Misra S."/>
            <person name="Crosby M.A."/>
            <person name="Mungall C.J."/>
            <person name="Matthews B.B."/>
            <person name="Campbell K.S."/>
            <person name="Hradecky P."/>
            <person name="Huang Y."/>
            <person name="Kaminker J.S."/>
            <person name="Millburn G.H."/>
            <person name="Prochnik S.E."/>
            <person name="Smith C.D."/>
            <person name="Tupy J.L."/>
            <person name="Whitfield E.J."/>
            <person name="Bayraktaroglu L."/>
            <person name="Berman B.P."/>
            <person name="Bettencourt B.R."/>
            <person name="Celniker S.E."/>
            <person name="de Grey A.D.N.J."/>
            <person name="Drysdale R.A."/>
            <person name="Harris N.L."/>
            <person name="Richter J."/>
            <person name="Russo S."/>
            <person name="Schroeder A.J."/>
            <person name="Shu S.Q."/>
            <person name="Stapleton M."/>
            <person name="Yamada C."/>
            <person name="Ashburner M."/>
            <person name="Gelbart W.M."/>
            <person name="Rubin G.M."/>
            <person name="Lewis S.E."/>
        </authorList>
    </citation>
    <scope>GENOME REANNOTATION</scope>
    <source>
        <strain>Berkeley</strain>
    </source>
</reference>
<reference key="4">
    <citation type="journal article" date="2002" name="Genome Biol.">
        <title>A Drosophila full-length cDNA resource.</title>
        <authorList>
            <person name="Stapleton M."/>
            <person name="Carlson J.W."/>
            <person name="Brokstein P."/>
            <person name="Yu C."/>
            <person name="Champe M."/>
            <person name="George R.A."/>
            <person name="Guarin H."/>
            <person name="Kronmiller B."/>
            <person name="Pacleb J.M."/>
            <person name="Park S."/>
            <person name="Wan K.H."/>
            <person name="Rubin G.M."/>
            <person name="Celniker S.E."/>
        </authorList>
    </citation>
    <scope>NUCLEOTIDE SEQUENCE [LARGE SCALE MRNA]</scope>
    <source>
        <strain>Berkeley</strain>
        <tissue>Embryo</tissue>
    </source>
</reference>
<accession>Q24152</accession>
<accession>Q9VLD0</accession>
<proteinExistence type="inferred from homology"/>
<keyword id="KW-0131">Cell cycle</keyword>
<keyword id="KW-0132">Cell division</keyword>
<keyword id="KW-1185">Reference proteome</keyword>
<sequence>MSKDIYYSDKYYDEQFEYRHVVLPKELVKMVPKTHLMTEAEWRSIGVQQSRGWIHYMIHKPEPHILLFRRPKTD</sequence>
<evidence type="ECO:0000250" key="1"/>
<evidence type="ECO:0000305" key="2"/>
<dbReference type="EMBL" id="U40077">
    <property type="protein sequence ID" value="AAB02189.1"/>
    <property type="molecule type" value="mRNA"/>
</dbReference>
<dbReference type="EMBL" id="AE014134">
    <property type="protein sequence ID" value="AAF52763.1"/>
    <property type="molecule type" value="Genomic_DNA"/>
</dbReference>
<dbReference type="EMBL" id="AY061285">
    <property type="protein sequence ID" value="AAL28833.1"/>
    <property type="molecule type" value="mRNA"/>
</dbReference>
<dbReference type="RefSeq" id="NP_476947.1">
    <property type="nucleotide sequence ID" value="NM_057599.4"/>
</dbReference>
<dbReference type="SMR" id="Q24152"/>
<dbReference type="BioGRID" id="60354">
    <property type="interactions" value="9"/>
</dbReference>
<dbReference type="DIP" id="DIP-17394N"/>
<dbReference type="FunCoup" id="Q24152">
    <property type="interactions" value="134"/>
</dbReference>
<dbReference type="IntAct" id="Q24152">
    <property type="interactions" value="12"/>
</dbReference>
<dbReference type="MINT" id="Q24152"/>
<dbReference type="STRING" id="7227.FBpp0079399"/>
<dbReference type="PaxDb" id="7227-FBpp0079399"/>
<dbReference type="EnsemblMetazoa" id="FBtr0079799">
    <property type="protein sequence ID" value="FBpp0079399"/>
    <property type="gene ID" value="FBgn0010314"/>
</dbReference>
<dbReference type="GeneID" id="34250"/>
<dbReference type="KEGG" id="dme:Dmel_CG3738"/>
<dbReference type="AGR" id="FB:FBgn0010314"/>
<dbReference type="CTD" id="34250"/>
<dbReference type="FlyBase" id="FBgn0010314">
    <property type="gene designation" value="Cks30A"/>
</dbReference>
<dbReference type="VEuPathDB" id="VectorBase:FBgn0010314"/>
<dbReference type="eggNOG" id="KOG3484">
    <property type="taxonomic scope" value="Eukaryota"/>
</dbReference>
<dbReference type="GeneTree" id="ENSGT00950000182971"/>
<dbReference type="HOGENOM" id="CLU_140546_2_0_1"/>
<dbReference type="InParanoid" id="Q24152"/>
<dbReference type="OMA" id="MSENEWR"/>
<dbReference type="OrthoDB" id="440676at2759"/>
<dbReference type="PhylomeDB" id="Q24152"/>
<dbReference type="Reactome" id="R-DME-187577">
    <property type="pathway name" value="SCF(Skp2)-mediated degradation of p27/p21"/>
</dbReference>
<dbReference type="Reactome" id="R-DME-69231">
    <property type="pathway name" value="Cyclin D associated events in G1"/>
</dbReference>
<dbReference type="SignaLink" id="Q24152"/>
<dbReference type="BioGRID-ORCS" id="34250">
    <property type="hits" value="1 hit in 3 CRISPR screens"/>
</dbReference>
<dbReference type="GenomeRNAi" id="34250"/>
<dbReference type="PRO" id="PR:Q24152"/>
<dbReference type="Proteomes" id="UP000000803">
    <property type="component" value="Chromosome 2L"/>
</dbReference>
<dbReference type="Bgee" id="FBgn0010314">
    <property type="expression patterns" value="Expressed in outer photoreceptor cell (Drosophila) in insect head and 47 other cell types or tissues"/>
</dbReference>
<dbReference type="ExpressionAtlas" id="Q24152">
    <property type="expression patterns" value="baseline and differential"/>
</dbReference>
<dbReference type="GO" id="GO:0000307">
    <property type="term" value="C:cyclin-dependent protein kinase holoenzyme complex"/>
    <property type="evidence" value="ECO:0000318"/>
    <property type="project" value="GO_Central"/>
</dbReference>
<dbReference type="GO" id="GO:0019005">
    <property type="term" value="C:SCF ubiquitin ligase complex"/>
    <property type="evidence" value="ECO:0000318"/>
    <property type="project" value="GO_Central"/>
</dbReference>
<dbReference type="GO" id="GO:0061575">
    <property type="term" value="F:cyclin-dependent protein serine/threonine kinase activator activity"/>
    <property type="evidence" value="ECO:0000318"/>
    <property type="project" value="GO_Central"/>
</dbReference>
<dbReference type="GO" id="GO:0042393">
    <property type="term" value="F:histone binding"/>
    <property type="evidence" value="ECO:0000318"/>
    <property type="project" value="GO_Central"/>
</dbReference>
<dbReference type="GO" id="GO:0019901">
    <property type="term" value="F:protein kinase binding"/>
    <property type="evidence" value="ECO:0000318"/>
    <property type="project" value="GO_Central"/>
</dbReference>
<dbReference type="GO" id="GO:0043130">
    <property type="term" value="F:ubiquitin binding"/>
    <property type="evidence" value="ECO:0000318"/>
    <property type="project" value="GO_Central"/>
</dbReference>
<dbReference type="GO" id="GO:0031145">
    <property type="term" value="P:anaphase-promoting complex-dependent catabolic process"/>
    <property type="evidence" value="ECO:0000315"/>
    <property type="project" value="FlyBase"/>
</dbReference>
<dbReference type="GO" id="GO:0051301">
    <property type="term" value="P:cell division"/>
    <property type="evidence" value="ECO:0007669"/>
    <property type="project" value="UniProtKB-KW"/>
</dbReference>
<dbReference type="GO" id="GO:0007144">
    <property type="term" value="P:female meiosis I"/>
    <property type="evidence" value="ECO:0000315"/>
    <property type="project" value="FlyBase"/>
</dbReference>
<dbReference type="GO" id="GO:0007143">
    <property type="term" value="P:female meiotic nuclear division"/>
    <property type="evidence" value="ECO:0000315"/>
    <property type="project" value="FlyBase"/>
</dbReference>
<dbReference type="GO" id="GO:0007488">
    <property type="term" value="P:histoblast morphogenesis"/>
    <property type="evidence" value="ECO:0000315"/>
    <property type="project" value="FlyBase"/>
</dbReference>
<dbReference type="GO" id="GO:0007346">
    <property type="term" value="P:regulation of mitotic cell cycle"/>
    <property type="evidence" value="ECO:0000318"/>
    <property type="project" value="GO_Central"/>
</dbReference>
<dbReference type="GO" id="GO:0051225">
    <property type="term" value="P:spindle assembly"/>
    <property type="evidence" value="ECO:0000315"/>
    <property type="project" value="FlyBase"/>
</dbReference>
<dbReference type="GO" id="GO:0007057">
    <property type="term" value="P:spindle assembly involved in female meiosis I"/>
    <property type="evidence" value="ECO:0000315"/>
    <property type="project" value="FlyBase"/>
</dbReference>
<dbReference type="GO" id="GO:0035186">
    <property type="term" value="P:syncytial blastoderm mitotic cell cycle"/>
    <property type="evidence" value="ECO:0000315"/>
    <property type="project" value="FlyBase"/>
</dbReference>
<dbReference type="FunFam" id="3.30.170.10:FF:000001">
    <property type="entry name" value="Cyclin-dependent kinases regulatory subunit"/>
    <property type="match status" value="1"/>
</dbReference>
<dbReference type="Gene3D" id="3.30.170.10">
    <property type="entry name" value="Cyclin-dependent kinase, regulatory subunit"/>
    <property type="match status" value="1"/>
</dbReference>
<dbReference type="InterPro" id="IPR000789">
    <property type="entry name" value="Cyclin-dep_kinase_reg-sub"/>
</dbReference>
<dbReference type="InterPro" id="IPR036858">
    <property type="entry name" value="Cyclin-dep_kinase_reg-sub_sf"/>
</dbReference>
<dbReference type="PANTHER" id="PTHR23415">
    <property type="entry name" value="CYCLIN-DEPENDENT KINASES REGULATORY SUBUNIT/60S RIBOSOME SUBUNIT BIOGENESIS PROTEIN NIP7"/>
    <property type="match status" value="1"/>
</dbReference>
<dbReference type="Pfam" id="PF01111">
    <property type="entry name" value="CKS"/>
    <property type="match status" value="1"/>
</dbReference>
<dbReference type="PRINTS" id="PR00296">
    <property type="entry name" value="CYCLINKINASE"/>
</dbReference>
<dbReference type="SMART" id="SM01084">
    <property type="entry name" value="CKS"/>
    <property type="match status" value="1"/>
</dbReference>
<dbReference type="SUPFAM" id="SSF55637">
    <property type="entry name" value="Cell cycle regulatory proteins"/>
    <property type="match status" value="1"/>
</dbReference>
<dbReference type="PROSITE" id="PS00944">
    <property type="entry name" value="CKS_1"/>
    <property type="match status" value="1"/>
</dbReference>
<dbReference type="PROSITE" id="PS00945">
    <property type="entry name" value="CKS_2"/>
    <property type="match status" value="1"/>
</dbReference>
<protein>
    <recommendedName>
        <fullName>Cyclin-dependent kinases regulatory subunit</fullName>
    </recommendedName>
</protein>
<name>CKS1_DROME</name>
<gene>
    <name type="primary">Cks30A</name>
    <name type="synonym">CDI2</name>
    <name type="synonym">Cks</name>
    <name type="synonym">Cks1</name>
    <name type="ORF">CG3738</name>
</gene>